<comment type="function">
    <text evidence="1">Cell division inhibitor that blocks the formation of polar Z ring septums. Rapidly oscillates between the poles of the cell to destabilize FtsZ filaments that have formed before they mature into polar Z rings. Prevents FtsZ polymerization.</text>
</comment>
<comment type="subunit">
    <text evidence="1">Interacts with MinD and FtsZ.</text>
</comment>
<comment type="similarity">
    <text evidence="1">Belongs to the MinC family.</text>
</comment>
<gene>
    <name evidence="1" type="primary">minC</name>
    <name type="ordered locus">Ccel_2559</name>
</gene>
<reference key="1">
    <citation type="submission" date="2009-01" db="EMBL/GenBank/DDBJ databases">
        <title>Complete sequence of Clostridium cellulolyticum H10.</title>
        <authorList>
            <consortium name="US DOE Joint Genome Institute"/>
            <person name="Lucas S."/>
            <person name="Copeland A."/>
            <person name="Lapidus A."/>
            <person name="Glavina del Rio T."/>
            <person name="Dalin E."/>
            <person name="Tice H."/>
            <person name="Bruce D."/>
            <person name="Goodwin L."/>
            <person name="Pitluck S."/>
            <person name="Chertkov O."/>
            <person name="Saunders E."/>
            <person name="Brettin T."/>
            <person name="Detter J.C."/>
            <person name="Han C."/>
            <person name="Larimer F."/>
            <person name="Land M."/>
            <person name="Hauser L."/>
            <person name="Kyrpides N."/>
            <person name="Ivanova N."/>
            <person name="Zhou J."/>
            <person name="Richardson P."/>
        </authorList>
    </citation>
    <scope>NUCLEOTIDE SEQUENCE [LARGE SCALE GENOMIC DNA]</scope>
    <source>
        <strain>ATCC 35319 / DSM 5812 / JCM 6584 / H10</strain>
    </source>
</reference>
<dbReference type="EMBL" id="CP001348">
    <property type="protein sequence ID" value="ACL76887.1"/>
    <property type="molecule type" value="Genomic_DNA"/>
</dbReference>
<dbReference type="RefSeq" id="WP_015925974.1">
    <property type="nucleotide sequence ID" value="NC_011898.1"/>
</dbReference>
<dbReference type="SMR" id="B8I6C2"/>
<dbReference type="STRING" id="394503.Ccel_2559"/>
<dbReference type="KEGG" id="cce:Ccel_2559"/>
<dbReference type="eggNOG" id="COG0850">
    <property type="taxonomic scope" value="Bacteria"/>
</dbReference>
<dbReference type="HOGENOM" id="CLU_048711_2_0_9"/>
<dbReference type="OrthoDB" id="9790810at2"/>
<dbReference type="Proteomes" id="UP000001349">
    <property type="component" value="Chromosome"/>
</dbReference>
<dbReference type="GO" id="GO:0000902">
    <property type="term" value="P:cell morphogenesis"/>
    <property type="evidence" value="ECO:0007669"/>
    <property type="project" value="InterPro"/>
</dbReference>
<dbReference type="GO" id="GO:0000917">
    <property type="term" value="P:division septum assembly"/>
    <property type="evidence" value="ECO:0007669"/>
    <property type="project" value="UniProtKB-KW"/>
</dbReference>
<dbReference type="GO" id="GO:1901891">
    <property type="term" value="P:regulation of cell septum assembly"/>
    <property type="evidence" value="ECO:0007669"/>
    <property type="project" value="InterPro"/>
</dbReference>
<dbReference type="Gene3D" id="2.160.20.70">
    <property type="match status" value="1"/>
</dbReference>
<dbReference type="Gene3D" id="3.30.160.540">
    <property type="match status" value="1"/>
</dbReference>
<dbReference type="HAMAP" id="MF_00267">
    <property type="entry name" value="MinC"/>
    <property type="match status" value="1"/>
</dbReference>
<dbReference type="InterPro" id="IPR016098">
    <property type="entry name" value="CAP/MinC_C"/>
</dbReference>
<dbReference type="InterPro" id="IPR013033">
    <property type="entry name" value="MinC"/>
</dbReference>
<dbReference type="InterPro" id="IPR036145">
    <property type="entry name" value="MinC_C_sf"/>
</dbReference>
<dbReference type="InterPro" id="IPR055219">
    <property type="entry name" value="MinC_N_1"/>
</dbReference>
<dbReference type="InterPro" id="IPR005526">
    <property type="entry name" value="Septum_form_inhib_MinC_C"/>
</dbReference>
<dbReference type="NCBIfam" id="TIGR01222">
    <property type="entry name" value="minC"/>
    <property type="match status" value="1"/>
</dbReference>
<dbReference type="PANTHER" id="PTHR34108">
    <property type="entry name" value="SEPTUM SITE-DETERMINING PROTEIN MINC"/>
    <property type="match status" value="1"/>
</dbReference>
<dbReference type="PANTHER" id="PTHR34108:SF1">
    <property type="entry name" value="SEPTUM SITE-DETERMINING PROTEIN MINC"/>
    <property type="match status" value="1"/>
</dbReference>
<dbReference type="Pfam" id="PF03775">
    <property type="entry name" value="MinC_C"/>
    <property type="match status" value="1"/>
</dbReference>
<dbReference type="Pfam" id="PF22642">
    <property type="entry name" value="MinC_N_1"/>
    <property type="match status" value="1"/>
</dbReference>
<dbReference type="SUPFAM" id="SSF63848">
    <property type="entry name" value="Cell-division inhibitor MinC, C-terminal domain"/>
    <property type="match status" value="1"/>
</dbReference>
<organism>
    <name type="scientific">Ruminiclostridium cellulolyticum (strain ATCC 35319 / DSM 5812 / JCM 6584 / H10)</name>
    <name type="common">Clostridium cellulolyticum</name>
    <dbReference type="NCBI Taxonomy" id="394503"/>
    <lineage>
        <taxon>Bacteria</taxon>
        <taxon>Bacillati</taxon>
        <taxon>Bacillota</taxon>
        <taxon>Clostridia</taxon>
        <taxon>Eubacteriales</taxon>
        <taxon>Oscillospiraceae</taxon>
        <taxon>Ruminiclostridium</taxon>
    </lineage>
</organism>
<evidence type="ECO:0000255" key="1">
    <source>
        <dbReference type="HAMAP-Rule" id="MF_00267"/>
    </source>
</evidence>
<name>MINC_RUMCH</name>
<sequence length="229" mass="25407">MDENSVTFKGTVNGLTIILKNEPEFSEIIQCMRDKVNSAGKFFRGAKLAVKYKGRILNEEERSQLLEILVRESGARIEAFEEDKEQVQNVANNVSSDKPVERKNQIKKYMFFKGIEEGQTKFYRGTVRSGQLVNFDGNLVILGDVNPGAVIEATGNIVVMGLLRGVVHAGSDGNKEAIVVALGLNPTQLRIADIITRPPDEKGVVGNPIPELAYVKDDILYVERFLPTR</sequence>
<proteinExistence type="inferred from homology"/>
<accession>B8I6C2</accession>
<keyword id="KW-0131">Cell cycle</keyword>
<keyword id="KW-0132">Cell division</keyword>
<keyword id="KW-1185">Reference proteome</keyword>
<keyword id="KW-0717">Septation</keyword>
<feature type="chain" id="PRO_1000191238" description="Probable septum site-determining protein MinC">
    <location>
        <begin position="1"/>
        <end position="229"/>
    </location>
</feature>
<protein>
    <recommendedName>
        <fullName evidence="1">Probable septum site-determining protein MinC</fullName>
    </recommendedName>
</protein>